<dbReference type="EC" id="2.8.1.8" evidence="1"/>
<dbReference type="EMBL" id="CP000510">
    <property type="protein sequence ID" value="ABM04732.1"/>
    <property type="molecule type" value="Genomic_DNA"/>
</dbReference>
<dbReference type="RefSeq" id="WP_011771286.1">
    <property type="nucleotide sequence ID" value="NC_008709.1"/>
</dbReference>
<dbReference type="SMR" id="A1SZ17"/>
<dbReference type="STRING" id="357804.Ping_3030"/>
<dbReference type="KEGG" id="pin:Ping_3030"/>
<dbReference type="eggNOG" id="COG0320">
    <property type="taxonomic scope" value="Bacteria"/>
</dbReference>
<dbReference type="HOGENOM" id="CLU_033144_2_1_6"/>
<dbReference type="OrthoDB" id="9787898at2"/>
<dbReference type="UniPathway" id="UPA00538">
    <property type="reaction ID" value="UER00593"/>
</dbReference>
<dbReference type="Proteomes" id="UP000000639">
    <property type="component" value="Chromosome"/>
</dbReference>
<dbReference type="GO" id="GO:0005737">
    <property type="term" value="C:cytoplasm"/>
    <property type="evidence" value="ECO:0007669"/>
    <property type="project" value="UniProtKB-SubCell"/>
</dbReference>
<dbReference type="GO" id="GO:0051539">
    <property type="term" value="F:4 iron, 4 sulfur cluster binding"/>
    <property type="evidence" value="ECO:0007669"/>
    <property type="project" value="UniProtKB-UniRule"/>
</dbReference>
<dbReference type="GO" id="GO:0016992">
    <property type="term" value="F:lipoate synthase activity"/>
    <property type="evidence" value="ECO:0007669"/>
    <property type="project" value="UniProtKB-UniRule"/>
</dbReference>
<dbReference type="GO" id="GO:0046872">
    <property type="term" value="F:metal ion binding"/>
    <property type="evidence" value="ECO:0007669"/>
    <property type="project" value="UniProtKB-KW"/>
</dbReference>
<dbReference type="CDD" id="cd01335">
    <property type="entry name" value="Radical_SAM"/>
    <property type="match status" value="1"/>
</dbReference>
<dbReference type="FunFam" id="3.20.20.70:FF:000023">
    <property type="entry name" value="Lipoyl synthase"/>
    <property type="match status" value="1"/>
</dbReference>
<dbReference type="Gene3D" id="3.20.20.70">
    <property type="entry name" value="Aldolase class I"/>
    <property type="match status" value="1"/>
</dbReference>
<dbReference type="HAMAP" id="MF_00206">
    <property type="entry name" value="Lipoyl_synth"/>
    <property type="match status" value="1"/>
</dbReference>
<dbReference type="InterPro" id="IPR013785">
    <property type="entry name" value="Aldolase_TIM"/>
</dbReference>
<dbReference type="InterPro" id="IPR006638">
    <property type="entry name" value="Elp3/MiaA/NifB-like_rSAM"/>
</dbReference>
<dbReference type="InterPro" id="IPR031691">
    <property type="entry name" value="LIAS_N"/>
</dbReference>
<dbReference type="InterPro" id="IPR003698">
    <property type="entry name" value="Lipoyl_synth"/>
</dbReference>
<dbReference type="InterPro" id="IPR007197">
    <property type="entry name" value="rSAM"/>
</dbReference>
<dbReference type="NCBIfam" id="TIGR00510">
    <property type="entry name" value="lipA"/>
    <property type="match status" value="1"/>
</dbReference>
<dbReference type="NCBIfam" id="NF004019">
    <property type="entry name" value="PRK05481.1"/>
    <property type="match status" value="1"/>
</dbReference>
<dbReference type="NCBIfam" id="NF009544">
    <property type="entry name" value="PRK12928.1"/>
    <property type="match status" value="1"/>
</dbReference>
<dbReference type="PANTHER" id="PTHR10949">
    <property type="entry name" value="LIPOYL SYNTHASE"/>
    <property type="match status" value="1"/>
</dbReference>
<dbReference type="PANTHER" id="PTHR10949:SF0">
    <property type="entry name" value="LIPOYL SYNTHASE, MITOCHONDRIAL"/>
    <property type="match status" value="1"/>
</dbReference>
<dbReference type="Pfam" id="PF16881">
    <property type="entry name" value="LIAS_N"/>
    <property type="match status" value="1"/>
</dbReference>
<dbReference type="Pfam" id="PF04055">
    <property type="entry name" value="Radical_SAM"/>
    <property type="match status" value="1"/>
</dbReference>
<dbReference type="PIRSF" id="PIRSF005963">
    <property type="entry name" value="Lipoyl_synth"/>
    <property type="match status" value="1"/>
</dbReference>
<dbReference type="SFLD" id="SFLDF00271">
    <property type="entry name" value="lipoyl_synthase"/>
    <property type="match status" value="1"/>
</dbReference>
<dbReference type="SFLD" id="SFLDG01058">
    <property type="entry name" value="lipoyl_synthase_like"/>
    <property type="match status" value="1"/>
</dbReference>
<dbReference type="SMART" id="SM00729">
    <property type="entry name" value="Elp3"/>
    <property type="match status" value="1"/>
</dbReference>
<dbReference type="SUPFAM" id="SSF102114">
    <property type="entry name" value="Radical SAM enzymes"/>
    <property type="match status" value="1"/>
</dbReference>
<dbReference type="PROSITE" id="PS51918">
    <property type="entry name" value="RADICAL_SAM"/>
    <property type="match status" value="1"/>
</dbReference>
<accession>A1SZ17</accession>
<comment type="function">
    <text evidence="1">Catalyzes the radical-mediated insertion of two sulfur atoms into the C-6 and C-8 positions of the octanoyl moiety bound to the lipoyl domains of lipoate-dependent enzymes, thereby converting the octanoylated domains into lipoylated derivatives.</text>
</comment>
<comment type="catalytic activity">
    <reaction evidence="1">
        <text>[[Fe-S] cluster scaffold protein carrying a second [4Fe-4S](2+) cluster] + N(6)-octanoyl-L-lysyl-[protein] + 2 oxidized [2Fe-2S]-[ferredoxin] + 2 S-adenosyl-L-methionine + 4 H(+) = [[Fe-S] cluster scaffold protein] + N(6)-[(R)-dihydrolipoyl]-L-lysyl-[protein] + 4 Fe(3+) + 2 hydrogen sulfide + 2 5'-deoxyadenosine + 2 L-methionine + 2 reduced [2Fe-2S]-[ferredoxin]</text>
        <dbReference type="Rhea" id="RHEA:16585"/>
        <dbReference type="Rhea" id="RHEA-COMP:9928"/>
        <dbReference type="Rhea" id="RHEA-COMP:10000"/>
        <dbReference type="Rhea" id="RHEA-COMP:10001"/>
        <dbReference type="Rhea" id="RHEA-COMP:10475"/>
        <dbReference type="Rhea" id="RHEA-COMP:14568"/>
        <dbReference type="Rhea" id="RHEA-COMP:14569"/>
        <dbReference type="ChEBI" id="CHEBI:15378"/>
        <dbReference type="ChEBI" id="CHEBI:17319"/>
        <dbReference type="ChEBI" id="CHEBI:29034"/>
        <dbReference type="ChEBI" id="CHEBI:29919"/>
        <dbReference type="ChEBI" id="CHEBI:33722"/>
        <dbReference type="ChEBI" id="CHEBI:33737"/>
        <dbReference type="ChEBI" id="CHEBI:33738"/>
        <dbReference type="ChEBI" id="CHEBI:57844"/>
        <dbReference type="ChEBI" id="CHEBI:59789"/>
        <dbReference type="ChEBI" id="CHEBI:78809"/>
        <dbReference type="ChEBI" id="CHEBI:83100"/>
        <dbReference type="EC" id="2.8.1.8"/>
    </reaction>
</comment>
<comment type="cofactor">
    <cofactor evidence="1">
        <name>[4Fe-4S] cluster</name>
        <dbReference type="ChEBI" id="CHEBI:49883"/>
    </cofactor>
    <text evidence="1">Binds 2 [4Fe-4S] clusters per subunit. One cluster is coordinated with 3 cysteines and an exchangeable S-adenosyl-L-methionine.</text>
</comment>
<comment type="pathway">
    <text evidence="1">Protein modification; protein lipoylation via endogenous pathway; protein N(6)-(lipoyl)lysine from octanoyl-[acyl-carrier-protein]: step 2/2.</text>
</comment>
<comment type="subcellular location">
    <subcellularLocation>
        <location evidence="1">Cytoplasm</location>
    </subcellularLocation>
</comment>
<comment type="similarity">
    <text evidence="1">Belongs to the radical SAM superfamily. Lipoyl synthase family.</text>
</comment>
<proteinExistence type="inferred from homology"/>
<sequence length="322" mass="36030">MSNKPSQLTAGKKLRDADKMSHIPIKVVPSNKSTLLKKPSWMKIKLSSDNTRVNEIKAALRKNNLHSVCEEASCPNLNECFNHGTATFMILGDICTRRCPFCDVGHGKPLAVDANEPKKLAETIKDMKLKYVVITSVDRDDLRDGGAQHFADCIREIRLLNPEIKIEILVPDFKGRMDKALACFEQDLPDVFNHNLETAPHLYKQVRPGADYKWSLKLLQKFKEKHPHIPTKSGLMVGLGETNEDIEQVLTDLRAHDVNMLTLGQYLQPSLDHLAVQRFVPPSEFDELGVKAKALGFDQAACGPLVRSSYHADLQASGQEVK</sequence>
<reference key="1">
    <citation type="journal article" date="2008" name="BMC Genomics">
        <title>Genomics of an extreme psychrophile, Psychromonas ingrahamii.</title>
        <authorList>
            <person name="Riley M."/>
            <person name="Staley J.T."/>
            <person name="Danchin A."/>
            <person name="Wang T.Z."/>
            <person name="Brettin T.S."/>
            <person name="Hauser L.J."/>
            <person name="Land M.L."/>
            <person name="Thompson L.S."/>
        </authorList>
    </citation>
    <scope>NUCLEOTIDE SEQUENCE [LARGE SCALE GENOMIC DNA]</scope>
    <source>
        <strain>DSM 17664 / CCUG 51855 / 37</strain>
    </source>
</reference>
<gene>
    <name evidence="1" type="primary">lipA</name>
    <name type="ordered locus">Ping_3030</name>
</gene>
<evidence type="ECO:0000255" key="1">
    <source>
        <dbReference type="HAMAP-Rule" id="MF_00206"/>
    </source>
</evidence>
<evidence type="ECO:0000255" key="2">
    <source>
        <dbReference type="PROSITE-ProRule" id="PRU01266"/>
    </source>
</evidence>
<name>LIPA_PSYIN</name>
<keyword id="KW-0004">4Fe-4S</keyword>
<keyword id="KW-0963">Cytoplasm</keyword>
<keyword id="KW-0408">Iron</keyword>
<keyword id="KW-0411">Iron-sulfur</keyword>
<keyword id="KW-0479">Metal-binding</keyword>
<keyword id="KW-1185">Reference proteome</keyword>
<keyword id="KW-0949">S-adenosyl-L-methionine</keyword>
<keyword id="KW-0808">Transferase</keyword>
<organism>
    <name type="scientific">Psychromonas ingrahamii (strain DSM 17664 / CCUG 51855 / 37)</name>
    <dbReference type="NCBI Taxonomy" id="357804"/>
    <lineage>
        <taxon>Bacteria</taxon>
        <taxon>Pseudomonadati</taxon>
        <taxon>Pseudomonadota</taxon>
        <taxon>Gammaproteobacteria</taxon>
        <taxon>Alteromonadales</taxon>
        <taxon>Psychromonadaceae</taxon>
        <taxon>Psychromonas</taxon>
    </lineage>
</organism>
<feature type="chain" id="PRO_0000325297" description="Lipoyl synthase">
    <location>
        <begin position="1"/>
        <end position="322"/>
    </location>
</feature>
<feature type="domain" description="Radical SAM core" evidence="2">
    <location>
        <begin position="81"/>
        <end position="298"/>
    </location>
</feature>
<feature type="binding site" evidence="1">
    <location>
        <position position="69"/>
    </location>
    <ligand>
        <name>[4Fe-4S] cluster</name>
        <dbReference type="ChEBI" id="CHEBI:49883"/>
        <label>1</label>
    </ligand>
</feature>
<feature type="binding site" evidence="1">
    <location>
        <position position="74"/>
    </location>
    <ligand>
        <name>[4Fe-4S] cluster</name>
        <dbReference type="ChEBI" id="CHEBI:49883"/>
        <label>1</label>
    </ligand>
</feature>
<feature type="binding site" evidence="1">
    <location>
        <position position="80"/>
    </location>
    <ligand>
        <name>[4Fe-4S] cluster</name>
        <dbReference type="ChEBI" id="CHEBI:49883"/>
        <label>1</label>
    </ligand>
</feature>
<feature type="binding site" evidence="1">
    <location>
        <position position="95"/>
    </location>
    <ligand>
        <name>[4Fe-4S] cluster</name>
        <dbReference type="ChEBI" id="CHEBI:49883"/>
        <label>2</label>
        <note>4Fe-4S-S-AdoMet</note>
    </ligand>
</feature>
<feature type="binding site" evidence="1">
    <location>
        <position position="99"/>
    </location>
    <ligand>
        <name>[4Fe-4S] cluster</name>
        <dbReference type="ChEBI" id="CHEBI:49883"/>
        <label>2</label>
        <note>4Fe-4S-S-AdoMet</note>
    </ligand>
</feature>
<feature type="binding site" evidence="1">
    <location>
        <position position="102"/>
    </location>
    <ligand>
        <name>[4Fe-4S] cluster</name>
        <dbReference type="ChEBI" id="CHEBI:49883"/>
        <label>2</label>
        <note>4Fe-4S-S-AdoMet</note>
    </ligand>
</feature>
<feature type="binding site" evidence="1">
    <location>
        <position position="309"/>
    </location>
    <ligand>
        <name>[4Fe-4S] cluster</name>
        <dbReference type="ChEBI" id="CHEBI:49883"/>
        <label>1</label>
    </ligand>
</feature>
<protein>
    <recommendedName>
        <fullName evidence="1">Lipoyl synthase</fullName>
        <ecNumber evidence="1">2.8.1.8</ecNumber>
    </recommendedName>
    <alternativeName>
        <fullName evidence="1">Lip-syn</fullName>
        <shortName evidence="1">LS</shortName>
    </alternativeName>
    <alternativeName>
        <fullName evidence="1">Lipoate synthase</fullName>
    </alternativeName>
    <alternativeName>
        <fullName evidence="1">Lipoic acid synthase</fullName>
    </alternativeName>
    <alternativeName>
        <fullName evidence="1">Sulfur insertion protein LipA</fullName>
    </alternativeName>
</protein>